<dbReference type="EC" id="1.1.1.25" evidence="1"/>
<dbReference type="EMBL" id="CP000941">
    <property type="protein sequence ID" value="ACA12589.1"/>
    <property type="molecule type" value="Genomic_DNA"/>
</dbReference>
<dbReference type="RefSeq" id="WP_004083503.1">
    <property type="nucleotide sequence ID" value="NC_010513.1"/>
</dbReference>
<dbReference type="SMR" id="B0U410"/>
<dbReference type="KEGG" id="xfm:Xfasm12_1685"/>
<dbReference type="HOGENOM" id="CLU_044063_2_1_6"/>
<dbReference type="UniPathway" id="UPA00053">
    <property type="reaction ID" value="UER00087"/>
</dbReference>
<dbReference type="GO" id="GO:0005829">
    <property type="term" value="C:cytosol"/>
    <property type="evidence" value="ECO:0007669"/>
    <property type="project" value="TreeGrafter"/>
</dbReference>
<dbReference type="GO" id="GO:0050661">
    <property type="term" value="F:NADP binding"/>
    <property type="evidence" value="ECO:0007669"/>
    <property type="project" value="InterPro"/>
</dbReference>
<dbReference type="GO" id="GO:0004764">
    <property type="term" value="F:shikimate 3-dehydrogenase (NADP+) activity"/>
    <property type="evidence" value="ECO:0007669"/>
    <property type="project" value="UniProtKB-UniRule"/>
</dbReference>
<dbReference type="GO" id="GO:0008652">
    <property type="term" value="P:amino acid biosynthetic process"/>
    <property type="evidence" value="ECO:0007669"/>
    <property type="project" value="UniProtKB-KW"/>
</dbReference>
<dbReference type="GO" id="GO:0009073">
    <property type="term" value="P:aromatic amino acid family biosynthetic process"/>
    <property type="evidence" value="ECO:0007669"/>
    <property type="project" value="UniProtKB-KW"/>
</dbReference>
<dbReference type="GO" id="GO:0009423">
    <property type="term" value="P:chorismate biosynthetic process"/>
    <property type="evidence" value="ECO:0007669"/>
    <property type="project" value="UniProtKB-UniRule"/>
</dbReference>
<dbReference type="GO" id="GO:0019632">
    <property type="term" value="P:shikimate metabolic process"/>
    <property type="evidence" value="ECO:0007669"/>
    <property type="project" value="InterPro"/>
</dbReference>
<dbReference type="CDD" id="cd01065">
    <property type="entry name" value="NAD_bind_Shikimate_DH"/>
    <property type="match status" value="1"/>
</dbReference>
<dbReference type="FunFam" id="3.40.50.10860:FF:000006">
    <property type="entry name" value="Shikimate dehydrogenase (NADP(+))"/>
    <property type="match status" value="1"/>
</dbReference>
<dbReference type="Gene3D" id="3.40.50.10860">
    <property type="entry name" value="Leucine Dehydrogenase, chain A, domain 1"/>
    <property type="match status" value="1"/>
</dbReference>
<dbReference type="Gene3D" id="3.40.50.720">
    <property type="entry name" value="NAD(P)-binding Rossmann-like Domain"/>
    <property type="match status" value="1"/>
</dbReference>
<dbReference type="HAMAP" id="MF_00222">
    <property type="entry name" value="Shikimate_DH_AroE"/>
    <property type="match status" value="1"/>
</dbReference>
<dbReference type="InterPro" id="IPR046346">
    <property type="entry name" value="Aminoacid_DH-like_N_sf"/>
</dbReference>
<dbReference type="InterPro" id="IPR036291">
    <property type="entry name" value="NAD(P)-bd_dom_sf"/>
</dbReference>
<dbReference type="InterPro" id="IPR041121">
    <property type="entry name" value="SDH_C"/>
</dbReference>
<dbReference type="InterPro" id="IPR011342">
    <property type="entry name" value="Shikimate_DH"/>
</dbReference>
<dbReference type="InterPro" id="IPR013708">
    <property type="entry name" value="Shikimate_DH-bd_N"/>
</dbReference>
<dbReference type="InterPro" id="IPR022893">
    <property type="entry name" value="Shikimate_DH_fam"/>
</dbReference>
<dbReference type="InterPro" id="IPR006151">
    <property type="entry name" value="Shikm_DH/Glu-tRNA_Rdtase"/>
</dbReference>
<dbReference type="NCBIfam" id="TIGR00507">
    <property type="entry name" value="aroE"/>
    <property type="match status" value="1"/>
</dbReference>
<dbReference type="NCBIfam" id="NF001310">
    <property type="entry name" value="PRK00258.1-2"/>
    <property type="match status" value="1"/>
</dbReference>
<dbReference type="PANTHER" id="PTHR21089:SF1">
    <property type="entry name" value="BIFUNCTIONAL 3-DEHYDROQUINATE DEHYDRATASE_SHIKIMATE DEHYDROGENASE, CHLOROPLASTIC"/>
    <property type="match status" value="1"/>
</dbReference>
<dbReference type="PANTHER" id="PTHR21089">
    <property type="entry name" value="SHIKIMATE DEHYDROGENASE"/>
    <property type="match status" value="1"/>
</dbReference>
<dbReference type="Pfam" id="PF18317">
    <property type="entry name" value="SDH_C"/>
    <property type="match status" value="1"/>
</dbReference>
<dbReference type="Pfam" id="PF01488">
    <property type="entry name" value="Shikimate_DH"/>
    <property type="match status" value="1"/>
</dbReference>
<dbReference type="Pfam" id="PF08501">
    <property type="entry name" value="Shikimate_dh_N"/>
    <property type="match status" value="1"/>
</dbReference>
<dbReference type="SUPFAM" id="SSF53223">
    <property type="entry name" value="Aminoacid dehydrogenase-like, N-terminal domain"/>
    <property type="match status" value="1"/>
</dbReference>
<dbReference type="SUPFAM" id="SSF51735">
    <property type="entry name" value="NAD(P)-binding Rossmann-fold domains"/>
    <property type="match status" value="1"/>
</dbReference>
<reference key="1">
    <citation type="journal article" date="2010" name="J. Bacteriol.">
        <title>Whole genome sequences of two Xylella fastidiosa strains (M12 and M23) causing almond leaf scorch disease in California.</title>
        <authorList>
            <person name="Chen J."/>
            <person name="Xie G."/>
            <person name="Han S."/>
            <person name="Chertkov O."/>
            <person name="Sims D."/>
            <person name="Civerolo E.L."/>
        </authorList>
    </citation>
    <scope>NUCLEOTIDE SEQUENCE [LARGE SCALE GENOMIC DNA]</scope>
    <source>
        <strain>M12</strain>
    </source>
</reference>
<sequence>MPVSRFAVFGHPIAHSLSPRIHTEFGRQMGVALDYLAFDVAPDAFRVSLEHFVAEGGYGANVTLPLKEAAFEVCTTLSARARRAGAVNTLSRVDGVWHGENTDGIGLVRNLTERHGLDLRGRRALLLGAGGAARGVAPALLDAGITEMVIVNRSPERADMLCDALGEPGRVSARYWGDLGDLGNFELIVNATSIGNTSDMRTFSLPRSLLDSMTVAVDLNYGSAAVPFLAWAHAVETRYAIDGLGMLVEQAAESFSLWHGRRPDTDPVYTVLHSEYGVPGRS</sequence>
<evidence type="ECO:0000255" key="1">
    <source>
        <dbReference type="HAMAP-Rule" id="MF_00222"/>
    </source>
</evidence>
<gene>
    <name evidence="1" type="primary">aroE</name>
    <name type="ordered locus">Xfasm12_1685</name>
</gene>
<accession>B0U410</accession>
<comment type="function">
    <text evidence="1">Involved in the biosynthesis of the chorismate, which leads to the biosynthesis of aromatic amino acids. Catalyzes the reversible NADPH linked reduction of 3-dehydroshikimate (DHSA) to yield shikimate (SA).</text>
</comment>
<comment type="catalytic activity">
    <reaction evidence="1">
        <text>shikimate + NADP(+) = 3-dehydroshikimate + NADPH + H(+)</text>
        <dbReference type="Rhea" id="RHEA:17737"/>
        <dbReference type="ChEBI" id="CHEBI:15378"/>
        <dbReference type="ChEBI" id="CHEBI:16630"/>
        <dbReference type="ChEBI" id="CHEBI:36208"/>
        <dbReference type="ChEBI" id="CHEBI:57783"/>
        <dbReference type="ChEBI" id="CHEBI:58349"/>
        <dbReference type="EC" id="1.1.1.25"/>
    </reaction>
</comment>
<comment type="pathway">
    <text evidence="1">Metabolic intermediate biosynthesis; chorismate biosynthesis; chorismate from D-erythrose 4-phosphate and phosphoenolpyruvate: step 4/7.</text>
</comment>
<comment type="subunit">
    <text evidence="1">Homodimer.</text>
</comment>
<comment type="similarity">
    <text evidence="1">Belongs to the shikimate dehydrogenase family.</text>
</comment>
<feature type="chain" id="PRO_1000100154" description="Shikimate dehydrogenase (NADP(+))">
    <location>
        <begin position="1"/>
        <end position="282"/>
    </location>
</feature>
<feature type="active site" description="Proton acceptor" evidence="1">
    <location>
        <position position="67"/>
    </location>
</feature>
<feature type="binding site" evidence="1">
    <location>
        <begin position="16"/>
        <end position="18"/>
    </location>
    <ligand>
        <name>shikimate</name>
        <dbReference type="ChEBI" id="CHEBI:36208"/>
    </ligand>
</feature>
<feature type="binding site" evidence="1">
    <location>
        <position position="63"/>
    </location>
    <ligand>
        <name>shikimate</name>
        <dbReference type="ChEBI" id="CHEBI:36208"/>
    </ligand>
</feature>
<feature type="binding site" evidence="1">
    <location>
        <position position="88"/>
    </location>
    <ligand>
        <name>shikimate</name>
        <dbReference type="ChEBI" id="CHEBI:36208"/>
    </ligand>
</feature>
<feature type="binding site" evidence="1">
    <location>
        <position position="103"/>
    </location>
    <ligand>
        <name>shikimate</name>
        <dbReference type="ChEBI" id="CHEBI:36208"/>
    </ligand>
</feature>
<feature type="binding site" evidence="1">
    <location>
        <begin position="128"/>
        <end position="132"/>
    </location>
    <ligand>
        <name>NADP(+)</name>
        <dbReference type="ChEBI" id="CHEBI:58349"/>
    </ligand>
</feature>
<feature type="binding site" evidence="1">
    <location>
        <position position="219"/>
    </location>
    <ligand>
        <name>NADP(+)</name>
        <dbReference type="ChEBI" id="CHEBI:58349"/>
    </ligand>
</feature>
<feature type="binding site" evidence="1">
    <location>
        <position position="221"/>
    </location>
    <ligand>
        <name>shikimate</name>
        <dbReference type="ChEBI" id="CHEBI:36208"/>
    </ligand>
</feature>
<feature type="binding site" evidence="1">
    <location>
        <position position="243"/>
    </location>
    <ligand>
        <name>NADP(+)</name>
        <dbReference type="ChEBI" id="CHEBI:58349"/>
    </ligand>
</feature>
<keyword id="KW-0028">Amino-acid biosynthesis</keyword>
<keyword id="KW-0057">Aromatic amino acid biosynthesis</keyword>
<keyword id="KW-0521">NADP</keyword>
<keyword id="KW-0560">Oxidoreductase</keyword>
<organism>
    <name type="scientific">Xylella fastidiosa (strain M12)</name>
    <dbReference type="NCBI Taxonomy" id="405440"/>
    <lineage>
        <taxon>Bacteria</taxon>
        <taxon>Pseudomonadati</taxon>
        <taxon>Pseudomonadota</taxon>
        <taxon>Gammaproteobacteria</taxon>
        <taxon>Lysobacterales</taxon>
        <taxon>Lysobacteraceae</taxon>
        <taxon>Xylella</taxon>
    </lineage>
</organism>
<name>AROE_XYLFM</name>
<protein>
    <recommendedName>
        <fullName evidence="1">Shikimate dehydrogenase (NADP(+))</fullName>
        <shortName evidence="1">SDH</shortName>
        <ecNumber evidence="1">1.1.1.25</ecNumber>
    </recommendedName>
</protein>
<proteinExistence type="inferred from homology"/>